<gene>
    <name evidence="1" type="primary">rplB</name>
    <name type="ordered locus">trd_0981</name>
</gene>
<accession>B9KZY4</accession>
<protein>
    <recommendedName>
        <fullName evidence="1">Large ribosomal subunit protein uL2</fullName>
    </recommendedName>
    <alternativeName>
        <fullName evidence="3">50S ribosomal protein L2</fullName>
    </alternativeName>
</protein>
<evidence type="ECO:0000255" key="1">
    <source>
        <dbReference type="HAMAP-Rule" id="MF_01320"/>
    </source>
</evidence>
<evidence type="ECO:0000256" key="2">
    <source>
        <dbReference type="SAM" id="MobiDB-lite"/>
    </source>
</evidence>
<evidence type="ECO:0000305" key="3"/>
<comment type="function">
    <text evidence="1">One of the primary rRNA binding proteins. Required for association of the 30S and 50S subunits to form the 70S ribosome, for tRNA binding and peptide bond formation. It has been suggested to have peptidyltransferase activity; this is somewhat controversial. Makes several contacts with the 16S rRNA in the 70S ribosome.</text>
</comment>
<comment type="subunit">
    <text evidence="1">Part of the 50S ribosomal subunit. Forms a bridge to the 30S subunit in the 70S ribosome.</text>
</comment>
<comment type="similarity">
    <text evidence="1">Belongs to the universal ribosomal protein uL2 family.</text>
</comment>
<keyword id="KW-1185">Reference proteome</keyword>
<keyword id="KW-0687">Ribonucleoprotein</keyword>
<keyword id="KW-0689">Ribosomal protein</keyword>
<keyword id="KW-0694">RNA-binding</keyword>
<keyword id="KW-0699">rRNA-binding</keyword>
<proteinExistence type="inferred from homology"/>
<name>RL2_THERP</name>
<reference key="1">
    <citation type="journal article" date="2009" name="PLoS ONE">
        <title>Complete genome sequence of the aerobic CO-oxidizing thermophile Thermomicrobium roseum.</title>
        <authorList>
            <person name="Wu D."/>
            <person name="Raymond J."/>
            <person name="Wu M."/>
            <person name="Chatterji S."/>
            <person name="Ren Q."/>
            <person name="Graham J.E."/>
            <person name="Bryant D.A."/>
            <person name="Robb F."/>
            <person name="Colman A."/>
            <person name="Tallon L.J."/>
            <person name="Badger J.H."/>
            <person name="Madupu R."/>
            <person name="Ward N.L."/>
            <person name="Eisen J.A."/>
        </authorList>
    </citation>
    <scope>NUCLEOTIDE SEQUENCE [LARGE SCALE GENOMIC DNA]</scope>
    <source>
        <strain>ATCC 27502 / DSM 5159 / P-2</strain>
    </source>
</reference>
<dbReference type="EMBL" id="CP001275">
    <property type="protein sequence ID" value="ACM05226.1"/>
    <property type="molecule type" value="Genomic_DNA"/>
</dbReference>
<dbReference type="RefSeq" id="WP_015921945.1">
    <property type="nucleotide sequence ID" value="NC_011959.1"/>
</dbReference>
<dbReference type="SMR" id="B9KZY4"/>
<dbReference type="STRING" id="309801.trd_0981"/>
<dbReference type="KEGG" id="tro:trd_0981"/>
<dbReference type="eggNOG" id="COG0090">
    <property type="taxonomic scope" value="Bacteria"/>
</dbReference>
<dbReference type="HOGENOM" id="CLU_036235_2_1_0"/>
<dbReference type="OrthoDB" id="9778722at2"/>
<dbReference type="Proteomes" id="UP000000447">
    <property type="component" value="Chromosome"/>
</dbReference>
<dbReference type="GO" id="GO:0015934">
    <property type="term" value="C:large ribosomal subunit"/>
    <property type="evidence" value="ECO:0007669"/>
    <property type="project" value="InterPro"/>
</dbReference>
<dbReference type="GO" id="GO:0019843">
    <property type="term" value="F:rRNA binding"/>
    <property type="evidence" value="ECO:0007669"/>
    <property type="project" value="UniProtKB-UniRule"/>
</dbReference>
<dbReference type="GO" id="GO:0003735">
    <property type="term" value="F:structural constituent of ribosome"/>
    <property type="evidence" value="ECO:0007669"/>
    <property type="project" value="InterPro"/>
</dbReference>
<dbReference type="GO" id="GO:0016740">
    <property type="term" value="F:transferase activity"/>
    <property type="evidence" value="ECO:0007669"/>
    <property type="project" value="InterPro"/>
</dbReference>
<dbReference type="GO" id="GO:0002181">
    <property type="term" value="P:cytoplasmic translation"/>
    <property type="evidence" value="ECO:0007669"/>
    <property type="project" value="TreeGrafter"/>
</dbReference>
<dbReference type="FunFam" id="2.30.30.30:FF:000001">
    <property type="entry name" value="50S ribosomal protein L2"/>
    <property type="match status" value="1"/>
</dbReference>
<dbReference type="FunFam" id="2.40.50.140:FF:000003">
    <property type="entry name" value="50S ribosomal protein L2"/>
    <property type="match status" value="1"/>
</dbReference>
<dbReference type="FunFam" id="4.10.950.10:FF:000001">
    <property type="entry name" value="50S ribosomal protein L2"/>
    <property type="match status" value="1"/>
</dbReference>
<dbReference type="Gene3D" id="2.30.30.30">
    <property type="match status" value="1"/>
</dbReference>
<dbReference type="Gene3D" id="2.40.50.140">
    <property type="entry name" value="Nucleic acid-binding proteins"/>
    <property type="match status" value="1"/>
</dbReference>
<dbReference type="Gene3D" id="4.10.950.10">
    <property type="entry name" value="Ribosomal protein L2, domain 3"/>
    <property type="match status" value="1"/>
</dbReference>
<dbReference type="HAMAP" id="MF_01320_B">
    <property type="entry name" value="Ribosomal_uL2_B"/>
    <property type="match status" value="1"/>
</dbReference>
<dbReference type="InterPro" id="IPR012340">
    <property type="entry name" value="NA-bd_OB-fold"/>
</dbReference>
<dbReference type="InterPro" id="IPR014722">
    <property type="entry name" value="Rib_uL2_dom2"/>
</dbReference>
<dbReference type="InterPro" id="IPR002171">
    <property type="entry name" value="Ribosomal_uL2"/>
</dbReference>
<dbReference type="InterPro" id="IPR005880">
    <property type="entry name" value="Ribosomal_uL2_bac/org-type"/>
</dbReference>
<dbReference type="InterPro" id="IPR022669">
    <property type="entry name" value="Ribosomal_uL2_C"/>
</dbReference>
<dbReference type="InterPro" id="IPR014726">
    <property type="entry name" value="Ribosomal_uL2_dom3"/>
</dbReference>
<dbReference type="InterPro" id="IPR022666">
    <property type="entry name" value="Ribosomal_uL2_RNA-bd_dom"/>
</dbReference>
<dbReference type="InterPro" id="IPR008991">
    <property type="entry name" value="Translation_prot_SH3-like_sf"/>
</dbReference>
<dbReference type="NCBIfam" id="TIGR01171">
    <property type="entry name" value="rplB_bact"/>
    <property type="match status" value="1"/>
</dbReference>
<dbReference type="PANTHER" id="PTHR13691:SF5">
    <property type="entry name" value="LARGE RIBOSOMAL SUBUNIT PROTEIN UL2M"/>
    <property type="match status" value="1"/>
</dbReference>
<dbReference type="PANTHER" id="PTHR13691">
    <property type="entry name" value="RIBOSOMAL PROTEIN L2"/>
    <property type="match status" value="1"/>
</dbReference>
<dbReference type="Pfam" id="PF00181">
    <property type="entry name" value="Ribosomal_L2"/>
    <property type="match status" value="1"/>
</dbReference>
<dbReference type="Pfam" id="PF03947">
    <property type="entry name" value="Ribosomal_L2_C"/>
    <property type="match status" value="1"/>
</dbReference>
<dbReference type="PIRSF" id="PIRSF002158">
    <property type="entry name" value="Ribosomal_L2"/>
    <property type="match status" value="1"/>
</dbReference>
<dbReference type="SMART" id="SM01383">
    <property type="entry name" value="Ribosomal_L2"/>
    <property type="match status" value="1"/>
</dbReference>
<dbReference type="SMART" id="SM01382">
    <property type="entry name" value="Ribosomal_L2_C"/>
    <property type="match status" value="1"/>
</dbReference>
<dbReference type="SUPFAM" id="SSF50249">
    <property type="entry name" value="Nucleic acid-binding proteins"/>
    <property type="match status" value="1"/>
</dbReference>
<dbReference type="SUPFAM" id="SSF50104">
    <property type="entry name" value="Translation proteins SH3-like domain"/>
    <property type="match status" value="1"/>
</dbReference>
<organism>
    <name type="scientific">Thermomicrobium roseum (strain ATCC 27502 / DSM 5159 / P-2)</name>
    <dbReference type="NCBI Taxonomy" id="309801"/>
    <lineage>
        <taxon>Bacteria</taxon>
        <taxon>Pseudomonadati</taxon>
        <taxon>Thermomicrobiota</taxon>
        <taxon>Thermomicrobia</taxon>
        <taxon>Thermomicrobiales</taxon>
        <taxon>Thermomicrobiaceae</taxon>
        <taxon>Thermomicrobium</taxon>
    </lineage>
</organism>
<feature type="chain" id="PRO_1000165777" description="Large ribosomal subunit protein uL2">
    <location>
        <begin position="1"/>
        <end position="275"/>
    </location>
</feature>
<feature type="region of interest" description="Disordered" evidence="2">
    <location>
        <begin position="221"/>
        <end position="275"/>
    </location>
</feature>
<feature type="compositionally biased region" description="Basic and acidic residues" evidence="2">
    <location>
        <begin position="227"/>
        <end position="239"/>
    </location>
</feature>
<feature type="compositionally biased region" description="Basic residues" evidence="2">
    <location>
        <begin position="254"/>
        <end position="263"/>
    </location>
</feature>
<feature type="compositionally biased region" description="Basic and acidic residues" evidence="2">
    <location>
        <begin position="264"/>
        <end position="275"/>
    </location>
</feature>
<sequence length="275" mass="30505">MPIKVYKPTTPGRRNMSVLTYEEITKEAPEKSLIEPLKKHAGRNNRGVITTRHRGGGNKRFYRIIDFRRDKWGIPAKVAAIEYDPNRTAFIALLHYADGEKRYILAPLGLKVGDIVQSGPGAPIRVGNALPLREIPLGTQVHNVELYPGRGGQLVRAAGAVAQVVAKIDNYVHLRLPSGEIRMVHADCMATIGQVGNLDHQNVSIGKAGRKRHMGWRPAVRGSAMTPRDHPHGGGEGKAPRGMPPKTPWGKPALGKRTRRNKKSDRFIIRRRYEA</sequence>